<name>AROC_EDWI9</name>
<comment type="function">
    <text evidence="1">Catalyzes the anti-1,4-elimination of the C-3 phosphate and the C-6 proR hydrogen from 5-enolpyruvylshikimate-3-phosphate (EPSP) to yield chorismate, which is the branch point compound that serves as the starting substrate for the three terminal pathways of aromatic amino acid biosynthesis. This reaction introduces a second double bond into the aromatic ring system.</text>
</comment>
<comment type="catalytic activity">
    <reaction evidence="1">
        <text>5-O-(1-carboxyvinyl)-3-phosphoshikimate = chorismate + phosphate</text>
        <dbReference type="Rhea" id="RHEA:21020"/>
        <dbReference type="ChEBI" id="CHEBI:29748"/>
        <dbReference type="ChEBI" id="CHEBI:43474"/>
        <dbReference type="ChEBI" id="CHEBI:57701"/>
        <dbReference type="EC" id="4.2.3.5"/>
    </reaction>
</comment>
<comment type="cofactor">
    <cofactor evidence="1">
        <name>FMNH2</name>
        <dbReference type="ChEBI" id="CHEBI:57618"/>
    </cofactor>
    <text evidence="1">Reduced FMN (FMNH(2)).</text>
</comment>
<comment type="pathway">
    <text evidence="1">Metabolic intermediate biosynthesis; chorismate biosynthesis; chorismate from D-erythrose 4-phosphate and phosphoenolpyruvate: step 7/7.</text>
</comment>
<comment type="subunit">
    <text evidence="1">Homotetramer.</text>
</comment>
<comment type="similarity">
    <text evidence="1">Belongs to the chorismate synthase family.</text>
</comment>
<proteinExistence type="inferred from homology"/>
<dbReference type="EC" id="4.2.3.5" evidence="1"/>
<dbReference type="EMBL" id="CP001600">
    <property type="protein sequence ID" value="ACR69922.1"/>
    <property type="molecule type" value="Genomic_DNA"/>
</dbReference>
<dbReference type="RefSeq" id="WP_015872023.1">
    <property type="nucleotide sequence ID" value="NZ_CP169062.1"/>
</dbReference>
<dbReference type="SMR" id="C5BAF2"/>
<dbReference type="STRING" id="67780.B6E78_05740"/>
<dbReference type="GeneID" id="69539647"/>
<dbReference type="KEGG" id="eic:NT01EI_2754"/>
<dbReference type="PATRIC" id="fig|634503.3.peg.2465"/>
<dbReference type="HOGENOM" id="CLU_034547_0_2_6"/>
<dbReference type="OrthoDB" id="9771806at2"/>
<dbReference type="UniPathway" id="UPA00053">
    <property type="reaction ID" value="UER00090"/>
</dbReference>
<dbReference type="Proteomes" id="UP000001485">
    <property type="component" value="Chromosome"/>
</dbReference>
<dbReference type="GO" id="GO:0005829">
    <property type="term" value="C:cytosol"/>
    <property type="evidence" value="ECO:0007669"/>
    <property type="project" value="TreeGrafter"/>
</dbReference>
<dbReference type="GO" id="GO:0004107">
    <property type="term" value="F:chorismate synthase activity"/>
    <property type="evidence" value="ECO:0007669"/>
    <property type="project" value="UniProtKB-UniRule"/>
</dbReference>
<dbReference type="GO" id="GO:0010181">
    <property type="term" value="F:FMN binding"/>
    <property type="evidence" value="ECO:0007669"/>
    <property type="project" value="TreeGrafter"/>
</dbReference>
<dbReference type="GO" id="GO:0008652">
    <property type="term" value="P:amino acid biosynthetic process"/>
    <property type="evidence" value="ECO:0007669"/>
    <property type="project" value="UniProtKB-KW"/>
</dbReference>
<dbReference type="GO" id="GO:0009073">
    <property type="term" value="P:aromatic amino acid family biosynthetic process"/>
    <property type="evidence" value="ECO:0007669"/>
    <property type="project" value="UniProtKB-KW"/>
</dbReference>
<dbReference type="GO" id="GO:0009423">
    <property type="term" value="P:chorismate biosynthetic process"/>
    <property type="evidence" value="ECO:0007669"/>
    <property type="project" value="UniProtKB-UniRule"/>
</dbReference>
<dbReference type="CDD" id="cd07304">
    <property type="entry name" value="Chorismate_synthase"/>
    <property type="match status" value="1"/>
</dbReference>
<dbReference type="FunFam" id="3.60.150.10:FF:000001">
    <property type="entry name" value="Chorismate synthase"/>
    <property type="match status" value="1"/>
</dbReference>
<dbReference type="Gene3D" id="3.60.150.10">
    <property type="entry name" value="Chorismate synthase AroC"/>
    <property type="match status" value="1"/>
</dbReference>
<dbReference type="HAMAP" id="MF_00300">
    <property type="entry name" value="Chorismate_synth"/>
    <property type="match status" value="1"/>
</dbReference>
<dbReference type="InterPro" id="IPR000453">
    <property type="entry name" value="Chorismate_synth"/>
</dbReference>
<dbReference type="InterPro" id="IPR035904">
    <property type="entry name" value="Chorismate_synth_AroC_sf"/>
</dbReference>
<dbReference type="InterPro" id="IPR020541">
    <property type="entry name" value="Chorismate_synthase_CS"/>
</dbReference>
<dbReference type="NCBIfam" id="TIGR00033">
    <property type="entry name" value="aroC"/>
    <property type="match status" value="1"/>
</dbReference>
<dbReference type="NCBIfam" id="NF003793">
    <property type="entry name" value="PRK05382.1"/>
    <property type="match status" value="1"/>
</dbReference>
<dbReference type="PANTHER" id="PTHR21085">
    <property type="entry name" value="CHORISMATE SYNTHASE"/>
    <property type="match status" value="1"/>
</dbReference>
<dbReference type="PANTHER" id="PTHR21085:SF0">
    <property type="entry name" value="CHORISMATE SYNTHASE"/>
    <property type="match status" value="1"/>
</dbReference>
<dbReference type="Pfam" id="PF01264">
    <property type="entry name" value="Chorismate_synt"/>
    <property type="match status" value="1"/>
</dbReference>
<dbReference type="PIRSF" id="PIRSF001456">
    <property type="entry name" value="Chorismate_synth"/>
    <property type="match status" value="1"/>
</dbReference>
<dbReference type="SUPFAM" id="SSF103263">
    <property type="entry name" value="Chorismate synthase, AroC"/>
    <property type="match status" value="1"/>
</dbReference>
<dbReference type="PROSITE" id="PS00787">
    <property type="entry name" value="CHORISMATE_SYNTHASE_1"/>
    <property type="match status" value="1"/>
</dbReference>
<dbReference type="PROSITE" id="PS00788">
    <property type="entry name" value="CHORISMATE_SYNTHASE_2"/>
    <property type="match status" value="1"/>
</dbReference>
<dbReference type="PROSITE" id="PS00789">
    <property type="entry name" value="CHORISMATE_SYNTHASE_3"/>
    <property type="match status" value="1"/>
</dbReference>
<sequence length="361" mass="38712">MAGNSIGQVFRVTTFGESHGAALGCIVDGVPPGMALSEADLQHDLDRRRPGASRYTTARREADRVRILSGVFEGVTTGTSIGLLIENTDQRSQDYSAIKDLFRPGHADYSYEQKYGLRDYRGGGRSSARETAMRVAAGAIAKKYLQQQHGIVIRACLSRMGDIVCRQYDWAQVEQNPFFCPDAQQLEALDALMRDLKKCGDSIGAEVTVMATGVPPGLGDPVFDRLDADLAHALMSINAVKGVEIGDGFAVVGQRGSEHRDEISPSGFLSNHAGGILGGISSGQPLLARLALKPTSSIMVPGQTITRAGEATTIVTHGRHDPCVGIRAVPIAEAMMALVLMDHLLRQRAQCADVACTVPRW</sequence>
<evidence type="ECO:0000255" key="1">
    <source>
        <dbReference type="HAMAP-Rule" id="MF_00300"/>
    </source>
</evidence>
<gene>
    <name evidence="1" type="primary">aroC</name>
    <name type="ordered locus">NT01EI_2754</name>
</gene>
<keyword id="KW-0028">Amino-acid biosynthesis</keyword>
<keyword id="KW-0057">Aromatic amino acid biosynthesis</keyword>
<keyword id="KW-0274">FAD</keyword>
<keyword id="KW-0285">Flavoprotein</keyword>
<keyword id="KW-0288">FMN</keyword>
<keyword id="KW-0456">Lyase</keyword>
<keyword id="KW-0521">NADP</keyword>
<reference key="1">
    <citation type="submission" date="2009-03" db="EMBL/GenBank/DDBJ databases">
        <title>Complete genome sequence of Edwardsiella ictaluri 93-146.</title>
        <authorList>
            <person name="Williams M.L."/>
            <person name="Gillaspy A.F."/>
            <person name="Dyer D.W."/>
            <person name="Thune R.L."/>
            <person name="Waldbieser G.C."/>
            <person name="Schuster S.C."/>
            <person name="Gipson J."/>
            <person name="Zaitshik J."/>
            <person name="Landry C."/>
            <person name="Lawrence M.L."/>
        </authorList>
    </citation>
    <scope>NUCLEOTIDE SEQUENCE [LARGE SCALE GENOMIC DNA]</scope>
    <source>
        <strain>93-146</strain>
    </source>
</reference>
<feature type="chain" id="PRO_1000204948" description="Chorismate synthase">
    <location>
        <begin position="1"/>
        <end position="361"/>
    </location>
</feature>
<feature type="binding site" evidence="1">
    <location>
        <position position="48"/>
    </location>
    <ligand>
        <name>NADP(+)</name>
        <dbReference type="ChEBI" id="CHEBI:58349"/>
    </ligand>
</feature>
<feature type="binding site" evidence="1">
    <location>
        <position position="54"/>
    </location>
    <ligand>
        <name>NADP(+)</name>
        <dbReference type="ChEBI" id="CHEBI:58349"/>
    </ligand>
</feature>
<feature type="binding site" evidence="1">
    <location>
        <begin position="125"/>
        <end position="127"/>
    </location>
    <ligand>
        <name>FMN</name>
        <dbReference type="ChEBI" id="CHEBI:58210"/>
    </ligand>
</feature>
<feature type="binding site" evidence="1">
    <location>
        <begin position="238"/>
        <end position="239"/>
    </location>
    <ligand>
        <name>FMN</name>
        <dbReference type="ChEBI" id="CHEBI:58210"/>
    </ligand>
</feature>
<feature type="binding site" evidence="1">
    <location>
        <position position="278"/>
    </location>
    <ligand>
        <name>FMN</name>
        <dbReference type="ChEBI" id="CHEBI:58210"/>
    </ligand>
</feature>
<feature type="binding site" evidence="1">
    <location>
        <begin position="293"/>
        <end position="297"/>
    </location>
    <ligand>
        <name>FMN</name>
        <dbReference type="ChEBI" id="CHEBI:58210"/>
    </ligand>
</feature>
<feature type="binding site" evidence="1">
    <location>
        <position position="319"/>
    </location>
    <ligand>
        <name>FMN</name>
        <dbReference type="ChEBI" id="CHEBI:58210"/>
    </ligand>
</feature>
<protein>
    <recommendedName>
        <fullName evidence="1">Chorismate synthase</fullName>
        <shortName evidence="1">CS</shortName>
        <ecNumber evidence="1">4.2.3.5</ecNumber>
    </recommendedName>
    <alternativeName>
        <fullName evidence="1">5-enolpyruvylshikimate-3-phosphate phospholyase</fullName>
    </alternativeName>
</protein>
<accession>C5BAF2</accession>
<organism>
    <name type="scientific">Edwardsiella ictaluri (strain 93-146)</name>
    <dbReference type="NCBI Taxonomy" id="634503"/>
    <lineage>
        <taxon>Bacteria</taxon>
        <taxon>Pseudomonadati</taxon>
        <taxon>Pseudomonadota</taxon>
        <taxon>Gammaproteobacteria</taxon>
        <taxon>Enterobacterales</taxon>
        <taxon>Hafniaceae</taxon>
        <taxon>Edwardsiella</taxon>
    </lineage>
</organism>